<name>EDC3_HUMAN</name>
<comment type="function">
    <text evidence="6 7 8 10">Binds single-stranded RNA. Involved in the process of mRNA degradation and in the positive regulation of mRNA decapping. May play a role in spermiogenesis and oogenesis.</text>
</comment>
<comment type="subunit">
    <text evidence="6 8 9 11 12">Homodimer (via YjeF N-terminal domain). Forms a complex with DCP1A, DCP2, DDX6 and EDC4/HEDLS, within this complex directly interacts with DCP1A and DDX6 (PubMed:16364915, PubMed:19285948, PubMed:31422817, PubMed:31439631). Interacts with ZFP36.</text>
</comment>
<comment type="interaction">
    <interactant intactId="EBI-997311">
        <id>Q96F86</id>
    </interactant>
    <interactant intactId="EBI-8648654">
        <id>Q9UJ72</id>
        <label>ANXA10</label>
    </interactant>
    <organismsDiffer>false</organismsDiffer>
    <experiments>11</experiments>
</comment>
<comment type="interaction">
    <interactant intactId="EBI-997311">
        <id>Q96F86</id>
    </interactant>
    <interactant intactId="EBI-374238">
        <id>Q9NPI6</id>
        <label>DCP1A</label>
    </interactant>
    <organismsDiffer>false</organismsDiffer>
    <experiments>19</experiments>
</comment>
<comment type="interaction">
    <interactant intactId="EBI-997311">
        <id>Q96F86</id>
    </interactant>
    <interactant intactId="EBI-521595">
        <id>Q8IZD4</id>
        <label>DCP1B</label>
    </interactant>
    <organismsDiffer>false</organismsDiffer>
    <experiments>14</experiments>
</comment>
<comment type="interaction">
    <interactant intactId="EBI-997311">
        <id>Q96F86</id>
    </interactant>
    <interactant intactId="EBI-351257">
        <id>P26196</id>
        <label>DDX6</label>
    </interactant>
    <organismsDiffer>false</organismsDiffer>
    <experiments>25</experiments>
</comment>
<comment type="interaction">
    <interactant intactId="EBI-997311">
        <id>Q96F86</id>
    </interactant>
    <interactant intactId="EBI-997311">
        <id>Q96F86</id>
        <label>EDC3</label>
    </interactant>
    <organismsDiffer>false</organismsDiffer>
    <experiments>8</experiments>
</comment>
<comment type="interaction">
    <interactant intactId="EBI-997311">
        <id>Q96F86</id>
    </interactant>
    <interactant intactId="EBI-2349927">
        <id>Q5JST6</id>
        <label>EFHC2</label>
    </interactant>
    <organismsDiffer>false</organismsDiffer>
    <experiments>7</experiments>
</comment>
<comment type="interaction">
    <interactant intactId="EBI-997311">
        <id>Q96F86</id>
    </interactant>
    <interactant intactId="EBI-739832">
        <id>Q8TBB1</id>
        <label>LNX1</label>
    </interactant>
    <organismsDiffer>false</organismsDiffer>
    <experiments>3</experiments>
</comment>
<comment type="interaction">
    <interactant intactId="EBI-997311">
        <id>Q96F86</id>
    </interactant>
    <interactant intactId="EBI-348567">
        <id>O75928-2</id>
        <label>PIAS2</label>
    </interactant>
    <organismsDiffer>false</organismsDiffer>
    <experiments>3</experiments>
</comment>
<comment type="interaction">
    <interactant intactId="EBI-997311">
        <id>Q96F86</id>
    </interactant>
    <interactant intactId="EBI-21845366">
        <id>P54317</id>
        <label>PNLIPRP2</label>
    </interactant>
    <organismsDiffer>false</organismsDiffer>
    <experiments>2</experiments>
</comment>
<comment type="interaction">
    <interactant intactId="EBI-997311">
        <id>Q96F86</id>
    </interactant>
    <interactant intactId="EBI-347462">
        <id>P47897</id>
        <label>QARS1</label>
    </interactant>
    <organismsDiffer>false</organismsDiffer>
    <experiments>3</experiments>
</comment>
<comment type="interaction">
    <interactant intactId="EBI-997311">
        <id>Q96F86</id>
    </interactant>
    <interactant intactId="EBI-476295">
        <id>P31947</id>
        <label>SFN</label>
    </interactant>
    <organismsDiffer>false</organismsDiffer>
    <experiments>4</experiments>
</comment>
<comment type="interaction">
    <interactant intactId="EBI-997311">
        <id>Q96F86</id>
    </interactant>
    <interactant intactId="EBI-347088">
        <id>P63104</id>
        <label>YWHAZ</label>
    </interactant>
    <organismsDiffer>false</organismsDiffer>
    <experiments>3</experiments>
</comment>
<comment type="interaction">
    <interactant intactId="EBI-997311">
        <id>Q96F86</id>
    </interactant>
    <interactant intactId="EBI-374248">
        <id>P26651</id>
        <label>ZFP36</label>
    </interactant>
    <organismsDiffer>false</organismsDiffer>
    <experiments>2</experiments>
</comment>
<comment type="subcellular location">
    <subcellularLocation>
        <location evidence="6">Cytoplasm</location>
        <location evidence="6">P-body</location>
    </subcellularLocation>
    <text>Processing bodies (PB).</text>
</comment>
<comment type="tissue specificity">
    <text evidence="7">Expressed in theca and granulosa cells in ovary, and in spermatids of the meiotic division part II and apical membrane of Sertoli cells in testis (at protein level). Also expressed in brain and mammary gland.</text>
</comment>
<comment type="domain">
    <text evidence="9">The DFDF domain is unstructured by itself. It assumes a helical fold upon interaction with DDX6.</text>
</comment>
<comment type="disease" evidence="10">
    <disease id="DI-04481">
        <name>Intellectual developmental disorder, autosomal recessive 50</name>
        <acronym>MRT50</acronym>
        <description>A disorder characterized by significantly below average general intellectual functioning associated with impairments in adaptive behavior and manifested during the developmental period. MRT50 patients show mild intellectual disability and microcephaly.</description>
        <dbReference type="MIM" id="616460"/>
    </disease>
    <text>The disease is caused by variants affecting the gene represented in this entry.</text>
</comment>
<comment type="similarity">
    <text evidence="13">Belongs to the EDC3 family.</text>
</comment>
<evidence type="ECO:0000250" key="1"/>
<evidence type="ECO:0000255" key="2">
    <source>
        <dbReference type="PROSITE-ProRule" id="PRU00719"/>
    </source>
</evidence>
<evidence type="ECO:0000255" key="3">
    <source>
        <dbReference type="PROSITE-ProRule" id="PRU00845"/>
    </source>
</evidence>
<evidence type="ECO:0000255" key="4">
    <source>
        <dbReference type="PROSITE-ProRule" id="PRU01346"/>
    </source>
</evidence>
<evidence type="ECO:0000256" key="5">
    <source>
        <dbReference type="SAM" id="MobiDB-lite"/>
    </source>
</evidence>
<evidence type="ECO:0000269" key="6">
    <source>
    </source>
</evidence>
<evidence type="ECO:0000269" key="7">
    <source>
    </source>
</evidence>
<evidence type="ECO:0000269" key="8">
    <source>
    </source>
</evidence>
<evidence type="ECO:0000269" key="9">
    <source>
    </source>
</evidence>
<evidence type="ECO:0000269" key="10">
    <source>
    </source>
</evidence>
<evidence type="ECO:0000269" key="11">
    <source>
    </source>
</evidence>
<evidence type="ECO:0000269" key="12">
    <source>
    </source>
</evidence>
<evidence type="ECO:0000305" key="13"/>
<evidence type="ECO:0007744" key="14">
    <source>
    </source>
</evidence>
<evidence type="ECO:0007744" key="15">
    <source>
    </source>
</evidence>
<evidence type="ECO:0007744" key="16">
    <source>
    </source>
</evidence>
<evidence type="ECO:0007744" key="17">
    <source>
    </source>
</evidence>
<evidence type="ECO:0007744" key="18">
    <source>
    </source>
</evidence>
<evidence type="ECO:0007744" key="19">
    <source>
    </source>
</evidence>
<evidence type="ECO:0007744" key="20">
    <source>
    </source>
</evidence>
<evidence type="ECO:0007829" key="21">
    <source>
        <dbReference type="PDB" id="2VC8"/>
    </source>
</evidence>
<evidence type="ECO:0007829" key="22">
    <source>
        <dbReference type="PDB" id="3D3J"/>
    </source>
</evidence>
<evidence type="ECO:0007829" key="23">
    <source>
        <dbReference type="PDB" id="3D3K"/>
    </source>
</evidence>
<evidence type="ECO:0007829" key="24">
    <source>
        <dbReference type="PDB" id="6S8S"/>
    </source>
</evidence>
<organism>
    <name type="scientific">Homo sapiens</name>
    <name type="common">Human</name>
    <dbReference type="NCBI Taxonomy" id="9606"/>
    <lineage>
        <taxon>Eukaryota</taxon>
        <taxon>Metazoa</taxon>
        <taxon>Chordata</taxon>
        <taxon>Craniata</taxon>
        <taxon>Vertebrata</taxon>
        <taxon>Euteleostomi</taxon>
        <taxon>Mammalia</taxon>
        <taxon>Eutheria</taxon>
        <taxon>Euarchontoglires</taxon>
        <taxon>Primates</taxon>
        <taxon>Haplorrhini</taxon>
        <taxon>Catarrhini</taxon>
        <taxon>Hominidae</taxon>
        <taxon>Homo</taxon>
    </lineage>
</organism>
<dbReference type="EMBL" id="AF193058">
    <property type="protein sequence ID" value="AAG22486.1"/>
    <property type="molecule type" value="mRNA"/>
</dbReference>
<dbReference type="EMBL" id="AK024781">
    <property type="protein sequence ID" value="BAB15001.1"/>
    <property type="molecule type" value="mRNA"/>
</dbReference>
<dbReference type="EMBL" id="AK056339">
    <property type="protein sequence ID" value="BAG51682.1"/>
    <property type="molecule type" value="mRNA"/>
</dbReference>
<dbReference type="EMBL" id="CH471136">
    <property type="protein sequence ID" value="EAW99316.1"/>
    <property type="molecule type" value="Genomic_DNA"/>
</dbReference>
<dbReference type="EMBL" id="CH471136">
    <property type="protein sequence ID" value="EAW99317.1"/>
    <property type="molecule type" value="Genomic_DNA"/>
</dbReference>
<dbReference type="EMBL" id="CH471136">
    <property type="protein sequence ID" value="EAW99318.1"/>
    <property type="molecule type" value="Genomic_DNA"/>
</dbReference>
<dbReference type="EMBL" id="CH471136">
    <property type="protein sequence ID" value="EAW99319.1"/>
    <property type="molecule type" value="Genomic_DNA"/>
</dbReference>
<dbReference type="EMBL" id="BC011534">
    <property type="protein sequence ID" value="AAH11534.1"/>
    <property type="molecule type" value="mRNA"/>
</dbReference>
<dbReference type="EMBL" id="BC021271">
    <property type="protein sequence ID" value="AAH21271.1"/>
    <property type="molecule type" value="mRNA"/>
</dbReference>
<dbReference type="CCDS" id="CCDS10267.1"/>
<dbReference type="RefSeq" id="NP_001135915.1">
    <property type="nucleotide sequence ID" value="NM_001142443.3"/>
</dbReference>
<dbReference type="RefSeq" id="NP_001135916.1">
    <property type="nucleotide sequence ID" value="NM_001142444.3"/>
</dbReference>
<dbReference type="RefSeq" id="NP_001338307.1">
    <property type="nucleotide sequence ID" value="NM_001351378.2"/>
</dbReference>
<dbReference type="RefSeq" id="NP_079359.2">
    <property type="nucleotide sequence ID" value="NM_025083.3"/>
</dbReference>
<dbReference type="RefSeq" id="XP_024305845.1">
    <property type="nucleotide sequence ID" value="XM_024450077.2"/>
</dbReference>
<dbReference type="RefSeq" id="XP_024305847.1">
    <property type="nucleotide sequence ID" value="XM_024450079.2"/>
</dbReference>
<dbReference type="RefSeq" id="XP_047289099.1">
    <property type="nucleotide sequence ID" value="XM_047433143.1"/>
</dbReference>
<dbReference type="RefSeq" id="XP_054234892.1">
    <property type="nucleotide sequence ID" value="XM_054378917.1"/>
</dbReference>
<dbReference type="RefSeq" id="XP_054234893.1">
    <property type="nucleotide sequence ID" value="XM_054378918.1"/>
</dbReference>
<dbReference type="RefSeq" id="XP_054234894.1">
    <property type="nucleotide sequence ID" value="XM_054378919.1"/>
</dbReference>
<dbReference type="PDB" id="2VC8">
    <property type="method" value="X-ray"/>
    <property type="resolution" value="1.31 A"/>
    <property type="chains" value="A=1-82"/>
</dbReference>
<dbReference type="PDB" id="2WAX">
    <property type="method" value="X-ray"/>
    <property type="resolution" value="2.30 A"/>
    <property type="chains" value="B/D=192-228"/>
</dbReference>
<dbReference type="PDB" id="2WAY">
    <property type="method" value="X-ray"/>
    <property type="resolution" value="2.30 A"/>
    <property type="chains" value="B/D=192-228"/>
</dbReference>
<dbReference type="PDB" id="3D3J">
    <property type="method" value="X-ray"/>
    <property type="resolution" value="2.80 A"/>
    <property type="chains" value="A=203-508"/>
</dbReference>
<dbReference type="PDB" id="3D3K">
    <property type="method" value="X-ray"/>
    <property type="resolution" value="2.20 A"/>
    <property type="chains" value="A/B/C/D=250-508"/>
</dbReference>
<dbReference type="PDB" id="6S8S">
    <property type="method" value="X-ray"/>
    <property type="resolution" value="2.21 A"/>
    <property type="chains" value="B/D=192-228"/>
</dbReference>
<dbReference type="PDBsum" id="2VC8"/>
<dbReference type="PDBsum" id="2WAX"/>
<dbReference type="PDBsum" id="2WAY"/>
<dbReference type="PDBsum" id="3D3J"/>
<dbReference type="PDBsum" id="3D3K"/>
<dbReference type="PDBsum" id="6S8S"/>
<dbReference type="SMR" id="Q96F86"/>
<dbReference type="BioGRID" id="123144">
    <property type="interactions" value="177"/>
</dbReference>
<dbReference type="ComplexPortal" id="CPX-2870">
    <property type="entry name" value="RNA decapping and exonuclease complex, DCP1A variant"/>
</dbReference>
<dbReference type="ComplexPortal" id="CPX-7341">
    <property type="entry name" value="RNA decapping and exonuclease complex, DCP1B variant"/>
</dbReference>
<dbReference type="CORUM" id="Q96F86"/>
<dbReference type="DIP" id="DIP-35516N"/>
<dbReference type="FunCoup" id="Q96F86">
    <property type="interactions" value="2397"/>
</dbReference>
<dbReference type="IntAct" id="Q96F86">
    <property type="interactions" value="84"/>
</dbReference>
<dbReference type="MINT" id="Q96F86"/>
<dbReference type="STRING" id="9606.ENSP00000497737"/>
<dbReference type="GlyGen" id="Q96F86">
    <property type="glycosylation" value="2 sites, 1 O-linked glycan (2 sites)"/>
</dbReference>
<dbReference type="iPTMnet" id="Q96F86"/>
<dbReference type="PhosphoSitePlus" id="Q96F86"/>
<dbReference type="BioMuta" id="EDC3"/>
<dbReference type="DMDM" id="74731669"/>
<dbReference type="jPOST" id="Q96F86"/>
<dbReference type="MassIVE" id="Q96F86"/>
<dbReference type="PaxDb" id="9606-ENSP00000320503"/>
<dbReference type="PeptideAtlas" id="Q96F86"/>
<dbReference type="ProteomicsDB" id="76503"/>
<dbReference type="Pumba" id="Q96F86"/>
<dbReference type="Antibodypedia" id="27003">
    <property type="antibodies" value="191 antibodies from 29 providers"/>
</dbReference>
<dbReference type="DNASU" id="80153"/>
<dbReference type="Ensembl" id="ENST00000315127.9">
    <property type="protein sequence ID" value="ENSP00000320503.4"/>
    <property type="gene ID" value="ENSG00000179151.13"/>
</dbReference>
<dbReference type="Ensembl" id="ENST00000426797.7">
    <property type="protein sequence ID" value="ENSP00000401343.3"/>
    <property type="gene ID" value="ENSG00000179151.13"/>
</dbReference>
<dbReference type="Ensembl" id="ENST00000568176.5">
    <property type="protein sequence ID" value="ENSP00000455580.1"/>
    <property type="gene ID" value="ENSG00000179151.13"/>
</dbReference>
<dbReference type="Ensembl" id="ENST00000647659.1">
    <property type="protein sequence ID" value="ENSP00000497737.1"/>
    <property type="gene ID" value="ENSG00000179151.13"/>
</dbReference>
<dbReference type="GeneID" id="80153"/>
<dbReference type="KEGG" id="hsa:80153"/>
<dbReference type="MANE-Select" id="ENST00000315127.9">
    <property type="protein sequence ID" value="ENSP00000320503.4"/>
    <property type="RefSeq nucleotide sequence ID" value="NM_025083.5"/>
    <property type="RefSeq protein sequence ID" value="NP_079359.2"/>
</dbReference>
<dbReference type="UCSC" id="uc002aym.4">
    <property type="organism name" value="human"/>
</dbReference>
<dbReference type="AGR" id="HGNC:26114"/>
<dbReference type="CTD" id="80153"/>
<dbReference type="DisGeNET" id="80153"/>
<dbReference type="GeneCards" id="EDC3"/>
<dbReference type="HGNC" id="HGNC:26114">
    <property type="gene designation" value="EDC3"/>
</dbReference>
<dbReference type="HPA" id="ENSG00000179151">
    <property type="expression patterns" value="Low tissue specificity"/>
</dbReference>
<dbReference type="MalaCards" id="EDC3"/>
<dbReference type="MIM" id="609842">
    <property type="type" value="gene"/>
</dbReference>
<dbReference type="MIM" id="616460">
    <property type="type" value="phenotype"/>
</dbReference>
<dbReference type="neXtProt" id="NX_Q96F86"/>
<dbReference type="OpenTargets" id="ENSG00000179151"/>
<dbReference type="Orphanet" id="88616">
    <property type="disease" value="Autosomal recessive non-syndromic intellectual disability"/>
</dbReference>
<dbReference type="PharmGKB" id="PA142670551"/>
<dbReference type="VEuPathDB" id="HostDB:ENSG00000179151"/>
<dbReference type="eggNOG" id="KOG2585">
    <property type="taxonomic scope" value="Eukaryota"/>
</dbReference>
<dbReference type="GeneTree" id="ENSGT00390000016435"/>
<dbReference type="HOGENOM" id="CLU_026194_0_0_1"/>
<dbReference type="InParanoid" id="Q96F86"/>
<dbReference type="OMA" id="NHQWPKI"/>
<dbReference type="OrthoDB" id="10030313at2759"/>
<dbReference type="PAN-GO" id="Q96F86">
    <property type="GO annotations" value="4 GO annotations based on evolutionary models"/>
</dbReference>
<dbReference type="PhylomeDB" id="Q96F86"/>
<dbReference type="TreeFam" id="TF324695"/>
<dbReference type="PathwayCommons" id="Q96F86"/>
<dbReference type="Reactome" id="R-HSA-430039">
    <property type="pathway name" value="mRNA decay by 5' to 3' exoribonuclease"/>
</dbReference>
<dbReference type="SignaLink" id="Q96F86"/>
<dbReference type="SIGNOR" id="Q96F86"/>
<dbReference type="BioGRID-ORCS" id="80153">
    <property type="hits" value="20 hits in 1154 CRISPR screens"/>
</dbReference>
<dbReference type="CD-CODE" id="232F8A39">
    <property type="entry name" value="P-body"/>
</dbReference>
<dbReference type="CD-CODE" id="DEE660B4">
    <property type="entry name" value="Stress granule"/>
</dbReference>
<dbReference type="ChiTaRS" id="EDC3">
    <property type="organism name" value="human"/>
</dbReference>
<dbReference type="EvolutionaryTrace" id="Q96F86"/>
<dbReference type="GeneWiki" id="EDC3"/>
<dbReference type="GenomeRNAi" id="80153"/>
<dbReference type="Pharos" id="Q96F86">
    <property type="development level" value="Tbio"/>
</dbReference>
<dbReference type="PRO" id="PR:Q96F86"/>
<dbReference type="Proteomes" id="UP000005640">
    <property type="component" value="Chromosome 15"/>
</dbReference>
<dbReference type="RNAct" id="Q96F86">
    <property type="molecule type" value="protein"/>
</dbReference>
<dbReference type="Bgee" id="ENSG00000179151">
    <property type="expression patterns" value="Expressed in left testis and 125 other cell types or tissues"/>
</dbReference>
<dbReference type="ExpressionAtlas" id="Q96F86">
    <property type="expression patterns" value="baseline and differential"/>
</dbReference>
<dbReference type="GO" id="GO:0036464">
    <property type="term" value="C:cytoplasmic ribonucleoprotein granule"/>
    <property type="evidence" value="ECO:0000314"/>
    <property type="project" value="HPA"/>
</dbReference>
<dbReference type="GO" id="GO:0005829">
    <property type="term" value="C:cytosol"/>
    <property type="evidence" value="ECO:0000304"/>
    <property type="project" value="Reactome"/>
</dbReference>
<dbReference type="GO" id="GO:0016020">
    <property type="term" value="C:membrane"/>
    <property type="evidence" value="ECO:0007005"/>
    <property type="project" value="UniProtKB"/>
</dbReference>
<dbReference type="GO" id="GO:0000932">
    <property type="term" value="C:P-body"/>
    <property type="evidence" value="ECO:0000318"/>
    <property type="project" value="GO_Central"/>
</dbReference>
<dbReference type="GO" id="GO:0042802">
    <property type="term" value="F:identical protein binding"/>
    <property type="evidence" value="ECO:0000353"/>
    <property type="project" value="IntAct"/>
</dbReference>
<dbReference type="GO" id="GO:0003729">
    <property type="term" value="F:mRNA binding"/>
    <property type="evidence" value="ECO:0000318"/>
    <property type="project" value="GO_Central"/>
</dbReference>
<dbReference type="GO" id="GO:0031087">
    <property type="term" value="P:deadenylation-independent decapping of nuclear-transcribed mRNA"/>
    <property type="evidence" value="ECO:0000318"/>
    <property type="project" value="GO_Central"/>
</dbReference>
<dbReference type="GO" id="GO:0033962">
    <property type="term" value="P:P-body assembly"/>
    <property type="evidence" value="ECO:0000318"/>
    <property type="project" value="GO_Central"/>
</dbReference>
<dbReference type="CDD" id="cd01737">
    <property type="entry name" value="LSm16_N"/>
    <property type="match status" value="1"/>
</dbReference>
<dbReference type="DisProt" id="DP02253"/>
<dbReference type="FunFam" id="2.30.30.100:FF:000026">
    <property type="entry name" value="Enhancer of mRNA-decapping protein 3"/>
    <property type="match status" value="1"/>
</dbReference>
<dbReference type="FunFam" id="3.40.50.10260:FF:000001">
    <property type="entry name" value="Enhancer of mRNA-decapping protein 3"/>
    <property type="match status" value="1"/>
</dbReference>
<dbReference type="Gene3D" id="2.30.30.100">
    <property type="match status" value="1"/>
</dbReference>
<dbReference type="Gene3D" id="3.40.50.10260">
    <property type="entry name" value="YjeF N-terminal domain"/>
    <property type="match status" value="1"/>
</dbReference>
<dbReference type="InterPro" id="IPR025762">
    <property type="entry name" value="DFDF"/>
</dbReference>
<dbReference type="InterPro" id="IPR019050">
    <property type="entry name" value="FDF_dom"/>
</dbReference>
<dbReference type="InterPro" id="IPR025609">
    <property type="entry name" value="Lsm14-like_N"/>
</dbReference>
<dbReference type="InterPro" id="IPR034107">
    <property type="entry name" value="Lsm16_N"/>
</dbReference>
<dbReference type="InterPro" id="IPR047575">
    <property type="entry name" value="Sm"/>
</dbReference>
<dbReference type="InterPro" id="IPR004443">
    <property type="entry name" value="YjeF_N_dom"/>
</dbReference>
<dbReference type="InterPro" id="IPR036652">
    <property type="entry name" value="YjeF_N_dom_sf"/>
</dbReference>
<dbReference type="PANTHER" id="PTHR13612">
    <property type="entry name" value="ENHANCER OF MRNA-DECAPPING PROTEIN 3"/>
    <property type="match status" value="1"/>
</dbReference>
<dbReference type="PANTHER" id="PTHR13612:SF0">
    <property type="entry name" value="ENHANCER OF MRNA-DECAPPING PROTEIN 3"/>
    <property type="match status" value="1"/>
</dbReference>
<dbReference type="Pfam" id="PF16598">
    <property type="entry name" value="Edc3_linker"/>
    <property type="match status" value="1"/>
</dbReference>
<dbReference type="Pfam" id="PF09532">
    <property type="entry name" value="FDF"/>
    <property type="match status" value="1"/>
</dbReference>
<dbReference type="Pfam" id="PF12701">
    <property type="entry name" value="LSM14"/>
    <property type="match status" value="1"/>
</dbReference>
<dbReference type="Pfam" id="PF03853">
    <property type="entry name" value="YjeF_N"/>
    <property type="match status" value="1"/>
</dbReference>
<dbReference type="SMART" id="SM01199">
    <property type="entry name" value="FDF"/>
    <property type="match status" value="1"/>
</dbReference>
<dbReference type="SMART" id="SM01271">
    <property type="entry name" value="LSM14"/>
    <property type="match status" value="1"/>
</dbReference>
<dbReference type="SUPFAM" id="SSF64153">
    <property type="entry name" value="YjeF N-terminal domain-like"/>
    <property type="match status" value="1"/>
</dbReference>
<dbReference type="PROSITE" id="PS51512">
    <property type="entry name" value="DFDF"/>
    <property type="match status" value="1"/>
</dbReference>
<dbReference type="PROSITE" id="PS52002">
    <property type="entry name" value="SM"/>
    <property type="match status" value="1"/>
</dbReference>
<dbReference type="PROSITE" id="PS51385">
    <property type="entry name" value="YJEF_N"/>
    <property type="match status" value="1"/>
</dbReference>
<keyword id="KW-0002">3D-structure</keyword>
<keyword id="KW-0963">Cytoplasm</keyword>
<keyword id="KW-0225">Disease variant</keyword>
<keyword id="KW-0991">Intellectual disability</keyword>
<keyword id="KW-0597">Phosphoprotein</keyword>
<keyword id="KW-1267">Proteomics identification</keyword>
<keyword id="KW-1185">Reference proteome</keyword>
<keyword id="KW-0694">RNA-binding</keyword>
<accession>Q96F86</accession>
<accession>B3KPH0</accession>
<accession>D3DW61</accession>
<accession>Q9H797</accession>
<sequence>MATDWLGSIVSINCGDSLGVYQGRVSAVDQVSQTISLTRPFHNGVKCLVPEVTFRAGDITELKILEIPGPGDNQHFGDLHQTELGPSGAGCQVGINQNGTGKFVKKPASSSSAPQNIPKRTDVKSQDVAVSPQQQQCSKSYVDRHMESLSQSKSFRRRHNSWSSSSRHPNQATPKKSGLKNGQMKNKDDECFGDDIEEIPDTDFDFEGNLALFDKAAVFEEIDTYERRSGTRSRGIPNERPTRYRHDENILESEPIVYRRIIVPHNVSKEFCTDSGLVVPSISYELHKKLLSVAEKHGLTLERRLEMTGVCASQMALTLLGGPNRLNPKNVHQRPTVALLCGPHVKGAQGISCGRHLANHDVQVILFLPNFVKMLESITNELSLFSKTQGQQVSSLKDLPTSPVDLVINCLDCPENVFLRDQPWYKAAVAWANQNRAPVLSIDPPVHEVEQGIDAKWSLALGLPLPLGEHAGRIYLCDIGIPQQVFQEVGINYHSPFGCKFVIPLHSA</sequence>
<feature type="chain" id="PRO_0000119054" description="Enhancer of mRNA-decapping protein 3">
    <location>
        <begin position="1"/>
        <end position="508"/>
    </location>
</feature>
<feature type="domain" description="Sm" evidence="4">
    <location>
        <begin position="1"/>
        <end position="68"/>
    </location>
</feature>
<feature type="domain" description="DFDF" evidence="3">
    <location>
        <begin position="192"/>
        <end position="228"/>
    </location>
</feature>
<feature type="domain" description="YjeF N-terminal" evidence="2">
    <location>
        <begin position="283"/>
        <end position="487"/>
    </location>
</feature>
<feature type="region of interest" description="Required for P-body targeting and interaction with DCP1A" evidence="1">
    <location>
        <begin position="1"/>
        <end position="79"/>
    </location>
</feature>
<feature type="region of interest" description="Disordered" evidence="5">
    <location>
        <begin position="95"/>
        <end position="192"/>
    </location>
</feature>
<feature type="region of interest" description="Required for interaction with DDX6" evidence="1">
    <location>
        <begin position="191"/>
        <end position="296"/>
    </location>
</feature>
<feature type="modified residue" description="Phosphoserine" evidence="14 15 19 20">
    <location>
        <position position="131"/>
    </location>
</feature>
<feature type="modified residue" description="Phosphoserine" evidence="18">
    <location>
        <position position="138"/>
    </location>
</feature>
<feature type="modified residue" description="Phosphoserine" evidence="18">
    <location>
        <position position="140"/>
    </location>
</feature>
<feature type="modified residue" description="Phosphoserine" evidence="16 17 19">
    <location>
        <position position="161"/>
    </location>
</feature>
<feature type="sequence variant" id="VAR_073963" description="In MRT50; does not enhance DCP2 decapping activity; dbSNP:rs1057517676." evidence="10">
    <original>F</original>
    <variation>S</variation>
    <location>
        <position position="54"/>
    </location>
</feature>
<feature type="mutagenesis site" description="Abolishes interaction with DDX6; when associated with A-206." evidence="9">
    <original>F</original>
    <variation>A</variation>
    <location>
        <position position="204"/>
    </location>
</feature>
<feature type="mutagenesis site" description="Abolishes interaction with DDX6; when associated with A-204." evidence="9">
    <original>F</original>
    <variation>A</variation>
    <location>
        <position position="206"/>
    </location>
</feature>
<feature type="mutagenesis site" description="Abolishes homodimerization and RNA binding; when associated with A-310." evidence="8">
    <original>E</original>
    <variation>A</variation>
    <location>
        <position position="306"/>
    </location>
</feature>
<feature type="mutagenesis site" description="Abolishes homodimerization and RNA binding; when associated with A-306." evidence="8">
    <original>V</original>
    <variation>A</variation>
    <location>
        <position position="310"/>
    </location>
</feature>
<feature type="sequence conflict" description="In Ref. 2; BAB15001." evidence="13" ref="2">
    <original>Q</original>
    <variation>R</variation>
    <location>
        <position position="74"/>
    </location>
</feature>
<feature type="turn" evidence="21">
    <location>
        <begin position="4"/>
        <end position="7"/>
    </location>
</feature>
<feature type="strand" evidence="21">
    <location>
        <begin position="9"/>
        <end position="13"/>
    </location>
</feature>
<feature type="turn" evidence="21">
    <location>
        <begin position="16"/>
        <end position="18"/>
    </location>
</feature>
<feature type="strand" evidence="21">
    <location>
        <begin position="20"/>
        <end position="29"/>
    </location>
</feature>
<feature type="turn" evidence="21">
    <location>
        <begin position="30"/>
        <end position="33"/>
    </location>
</feature>
<feature type="strand" evidence="21">
    <location>
        <begin position="34"/>
        <end position="42"/>
    </location>
</feature>
<feature type="strand" evidence="21">
    <location>
        <begin position="48"/>
        <end position="55"/>
    </location>
</feature>
<feature type="helix" evidence="21">
    <location>
        <begin position="56"/>
        <end position="58"/>
    </location>
</feature>
<feature type="strand" evidence="21">
    <location>
        <begin position="60"/>
        <end position="66"/>
    </location>
</feature>
<feature type="turn" evidence="24">
    <location>
        <begin position="196"/>
        <end position="198"/>
    </location>
</feature>
<feature type="helix" evidence="24">
    <location>
        <begin position="206"/>
        <end position="210"/>
    </location>
</feature>
<feature type="helix" evidence="24">
    <location>
        <begin position="215"/>
        <end position="225"/>
    </location>
</feature>
<feature type="strand" evidence="23">
    <location>
        <begin position="270"/>
        <end position="272"/>
    </location>
</feature>
<feature type="strand" evidence="23">
    <location>
        <begin position="278"/>
        <end position="280"/>
    </location>
</feature>
<feature type="helix" evidence="23">
    <location>
        <begin position="284"/>
        <end position="296"/>
    </location>
</feature>
<feature type="helix" evidence="23">
    <location>
        <begin position="301"/>
        <end position="319"/>
    </location>
</feature>
<feature type="strand" evidence="23">
    <location>
        <begin position="336"/>
        <end position="341"/>
    </location>
</feature>
<feature type="helix" evidence="23">
    <location>
        <begin position="345"/>
        <end position="359"/>
    </location>
</feature>
<feature type="strand" evidence="23">
    <location>
        <begin position="363"/>
        <end position="367"/>
    </location>
</feature>
<feature type="helix" evidence="23">
    <location>
        <begin position="376"/>
        <end position="385"/>
    </location>
</feature>
<feature type="strand" evidence="23">
    <location>
        <begin position="391"/>
        <end position="394"/>
    </location>
</feature>
<feature type="helix" evidence="23">
    <location>
        <begin position="396"/>
        <end position="398"/>
    </location>
</feature>
<feature type="strand" evidence="23">
    <location>
        <begin position="405"/>
        <end position="410"/>
    </location>
</feature>
<feature type="helix" evidence="23">
    <location>
        <begin position="419"/>
        <end position="421"/>
    </location>
</feature>
<feature type="helix" evidence="23">
    <location>
        <begin position="423"/>
        <end position="435"/>
    </location>
</feature>
<feature type="strand" evidence="23">
    <location>
        <begin position="439"/>
        <end position="443"/>
    </location>
</feature>
<feature type="strand" evidence="23">
    <location>
        <begin position="456"/>
        <end position="463"/>
    </location>
</feature>
<feature type="helix" evidence="23">
    <location>
        <begin position="469"/>
        <end position="471"/>
    </location>
</feature>
<feature type="strand" evidence="23">
    <location>
        <begin position="473"/>
        <end position="477"/>
    </location>
</feature>
<feature type="helix" evidence="23">
    <location>
        <begin position="483"/>
        <end position="488"/>
    </location>
</feature>
<feature type="turn" evidence="22">
    <location>
        <begin position="496"/>
        <end position="499"/>
    </location>
</feature>
<feature type="strand" evidence="23">
    <location>
        <begin position="501"/>
        <end position="506"/>
    </location>
</feature>
<protein>
    <recommendedName>
        <fullName>Enhancer of mRNA-decapping protein 3</fullName>
    </recommendedName>
    <alternativeName>
        <fullName>LSM16 homolog</fullName>
    </alternativeName>
    <alternativeName>
        <fullName>YjeF N-terminal domain-containing protein 2</fullName>
        <shortName>YjeF_N2</shortName>
        <shortName>hYjeF_N2</shortName>
    </alternativeName>
    <alternativeName>
        <fullName>YjeF domain-containing protein 1</fullName>
    </alternativeName>
</protein>
<proteinExistence type="evidence at protein level"/>
<reference key="1">
    <citation type="journal article" date="2004" name="Proc. Natl. Acad. Sci. U.S.A.">
        <title>Large-scale cDNA transfection screening for genes related to cancer development and progression.</title>
        <authorList>
            <person name="Wan D."/>
            <person name="Gong Y."/>
            <person name="Qin W."/>
            <person name="Zhang P."/>
            <person name="Li J."/>
            <person name="Wei L."/>
            <person name="Zhou X."/>
            <person name="Li H."/>
            <person name="Qiu X."/>
            <person name="Zhong F."/>
            <person name="He L."/>
            <person name="Yu J."/>
            <person name="Yao G."/>
            <person name="Jiang H."/>
            <person name="Qian L."/>
            <person name="Yu Y."/>
            <person name="Shu H."/>
            <person name="Chen X."/>
            <person name="Xu H."/>
            <person name="Guo M."/>
            <person name="Pan Z."/>
            <person name="Chen Y."/>
            <person name="Ge C."/>
            <person name="Yang S."/>
            <person name="Gu J."/>
        </authorList>
    </citation>
    <scope>NUCLEOTIDE SEQUENCE [LARGE SCALE MRNA]</scope>
</reference>
<reference key="2">
    <citation type="journal article" date="2004" name="Nat. Genet.">
        <title>Complete sequencing and characterization of 21,243 full-length human cDNAs.</title>
        <authorList>
            <person name="Ota T."/>
            <person name="Suzuki Y."/>
            <person name="Nishikawa T."/>
            <person name="Otsuki T."/>
            <person name="Sugiyama T."/>
            <person name="Irie R."/>
            <person name="Wakamatsu A."/>
            <person name="Hayashi K."/>
            <person name="Sato H."/>
            <person name="Nagai K."/>
            <person name="Kimura K."/>
            <person name="Makita H."/>
            <person name="Sekine M."/>
            <person name="Obayashi M."/>
            <person name="Nishi T."/>
            <person name="Shibahara T."/>
            <person name="Tanaka T."/>
            <person name="Ishii S."/>
            <person name="Yamamoto J."/>
            <person name="Saito K."/>
            <person name="Kawai Y."/>
            <person name="Isono Y."/>
            <person name="Nakamura Y."/>
            <person name="Nagahari K."/>
            <person name="Murakami K."/>
            <person name="Yasuda T."/>
            <person name="Iwayanagi T."/>
            <person name="Wagatsuma M."/>
            <person name="Shiratori A."/>
            <person name="Sudo H."/>
            <person name="Hosoiri T."/>
            <person name="Kaku Y."/>
            <person name="Kodaira H."/>
            <person name="Kondo H."/>
            <person name="Sugawara M."/>
            <person name="Takahashi M."/>
            <person name="Kanda K."/>
            <person name="Yokoi T."/>
            <person name="Furuya T."/>
            <person name="Kikkawa E."/>
            <person name="Omura Y."/>
            <person name="Abe K."/>
            <person name="Kamihara K."/>
            <person name="Katsuta N."/>
            <person name="Sato K."/>
            <person name="Tanikawa M."/>
            <person name="Yamazaki M."/>
            <person name="Ninomiya K."/>
            <person name="Ishibashi T."/>
            <person name="Yamashita H."/>
            <person name="Murakawa K."/>
            <person name="Fujimori K."/>
            <person name="Tanai H."/>
            <person name="Kimata M."/>
            <person name="Watanabe M."/>
            <person name="Hiraoka S."/>
            <person name="Chiba Y."/>
            <person name="Ishida S."/>
            <person name="Ono Y."/>
            <person name="Takiguchi S."/>
            <person name="Watanabe S."/>
            <person name="Yosida M."/>
            <person name="Hotuta T."/>
            <person name="Kusano J."/>
            <person name="Kanehori K."/>
            <person name="Takahashi-Fujii A."/>
            <person name="Hara H."/>
            <person name="Tanase T.-O."/>
            <person name="Nomura Y."/>
            <person name="Togiya S."/>
            <person name="Komai F."/>
            <person name="Hara R."/>
            <person name="Takeuchi K."/>
            <person name="Arita M."/>
            <person name="Imose N."/>
            <person name="Musashino K."/>
            <person name="Yuuki H."/>
            <person name="Oshima A."/>
            <person name="Sasaki N."/>
            <person name="Aotsuka S."/>
            <person name="Yoshikawa Y."/>
            <person name="Matsunawa H."/>
            <person name="Ichihara T."/>
            <person name="Shiohata N."/>
            <person name="Sano S."/>
            <person name="Moriya S."/>
            <person name="Momiyama H."/>
            <person name="Satoh N."/>
            <person name="Takami S."/>
            <person name="Terashima Y."/>
            <person name="Suzuki O."/>
            <person name="Nakagawa S."/>
            <person name="Senoh A."/>
            <person name="Mizoguchi H."/>
            <person name="Goto Y."/>
            <person name="Shimizu F."/>
            <person name="Wakebe H."/>
            <person name="Hishigaki H."/>
            <person name="Watanabe T."/>
            <person name="Sugiyama A."/>
            <person name="Takemoto M."/>
            <person name="Kawakami B."/>
            <person name="Yamazaki M."/>
            <person name="Watanabe K."/>
            <person name="Kumagai A."/>
            <person name="Itakura S."/>
            <person name="Fukuzumi Y."/>
            <person name="Fujimori Y."/>
            <person name="Komiyama M."/>
            <person name="Tashiro H."/>
            <person name="Tanigami A."/>
            <person name="Fujiwara T."/>
            <person name="Ono T."/>
            <person name="Yamada K."/>
            <person name="Fujii Y."/>
            <person name="Ozaki K."/>
            <person name="Hirao M."/>
            <person name="Ohmori Y."/>
            <person name="Kawabata A."/>
            <person name="Hikiji T."/>
            <person name="Kobatake N."/>
            <person name="Inagaki H."/>
            <person name="Ikema Y."/>
            <person name="Okamoto S."/>
            <person name="Okitani R."/>
            <person name="Kawakami T."/>
            <person name="Noguchi S."/>
            <person name="Itoh T."/>
            <person name="Shigeta K."/>
            <person name="Senba T."/>
            <person name="Matsumura K."/>
            <person name="Nakajima Y."/>
            <person name="Mizuno T."/>
            <person name="Morinaga M."/>
            <person name="Sasaki M."/>
            <person name="Togashi T."/>
            <person name="Oyama M."/>
            <person name="Hata H."/>
            <person name="Watanabe M."/>
            <person name="Komatsu T."/>
            <person name="Mizushima-Sugano J."/>
            <person name="Satoh T."/>
            <person name="Shirai Y."/>
            <person name="Takahashi Y."/>
            <person name="Nakagawa K."/>
            <person name="Okumura K."/>
            <person name="Nagase T."/>
            <person name="Nomura N."/>
            <person name="Kikuchi H."/>
            <person name="Masuho Y."/>
            <person name="Yamashita R."/>
            <person name="Nakai K."/>
            <person name="Yada T."/>
            <person name="Nakamura Y."/>
            <person name="Ohara O."/>
            <person name="Isogai T."/>
            <person name="Sugano S."/>
        </authorList>
    </citation>
    <scope>NUCLEOTIDE SEQUENCE [LARGE SCALE MRNA]</scope>
</reference>
<reference key="3">
    <citation type="submission" date="2005-09" db="EMBL/GenBank/DDBJ databases">
        <authorList>
            <person name="Mural R.J."/>
            <person name="Istrail S."/>
            <person name="Sutton G.G."/>
            <person name="Florea L."/>
            <person name="Halpern A.L."/>
            <person name="Mobarry C.M."/>
            <person name="Lippert R."/>
            <person name="Walenz B."/>
            <person name="Shatkay H."/>
            <person name="Dew I."/>
            <person name="Miller J.R."/>
            <person name="Flanigan M.J."/>
            <person name="Edwards N.J."/>
            <person name="Bolanos R."/>
            <person name="Fasulo D."/>
            <person name="Halldorsson B.V."/>
            <person name="Hannenhalli S."/>
            <person name="Turner R."/>
            <person name="Yooseph S."/>
            <person name="Lu F."/>
            <person name="Nusskern D.R."/>
            <person name="Shue B.C."/>
            <person name="Zheng X.H."/>
            <person name="Zhong F."/>
            <person name="Delcher A.L."/>
            <person name="Huson D.H."/>
            <person name="Kravitz S.A."/>
            <person name="Mouchard L."/>
            <person name="Reinert K."/>
            <person name="Remington K.A."/>
            <person name="Clark A.G."/>
            <person name="Waterman M.S."/>
            <person name="Eichler E.E."/>
            <person name="Adams M.D."/>
            <person name="Hunkapiller M.W."/>
            <person name="Myers E.W."/>
            <person name="Venter J.C."/>
        </authorList>
    </citation>
    <scope>NUCLEOTIDE SEQUENCE [LARGE SCALE GENOMIC DNA]</scope>
</reference>
<reference key="4">
    <citation type="journal article" date="2004" name="Genome Res.">
        <title>The status, quality, and expansion of the NIH full-length cDNA project: the Mammalian Gene Collection (MGC).</title>
        <authorList>
            <consortium name="The MGC Project Team"/>
        </authorList>
    </citation>
    <scope>NUCLEOTIDE SEQUENCE [LARGE SCALE MRNA]</scope>
    <source>
        <tissue>Eye</tissue>
        <tissue>Placenta</tissue>
    </source>
</reference>
<reference key="5">
    <citation type="journal article" date="2005" name="Mol. Cell">
        <title>Multiple processing body factors and the ARE binding protein TTP activate mRNA decapping.</title>
        <authorList>
            <person name="Fenger-Groen M."/>
            <person name="Fillman C."/>
            <person name="Norrild B."/>
            <person name="Lykke-Andersen J."/>
        </authorList>
    </citation>
    <scope>IDENTIFICATION BY MASS SPECTROMETRY</scope>
    <scope>INTERACTION WITH DCP1A; DCP2; DDX6; EDC4 AND ZFP36</scope>
    <scope>SUBCELLULAR LOCATION</scope>
    <scope>FUNCTION</scope>
</reference>
<reference key="6">
    <citation type="journal article" date="2006" name="Nat. Biotechnol.">
        <title>A probability-based approach for high-throughput protein phosphorylation analysis and site localization.</title>
        <authorList>
            <person name="Beausoleil S.A."/>
            <person name="Villen J."/>
            <person name="Gerber S.A."/>
            <person name="Rush J."/>
            <person name="Gygi S.P."/>
        </authorList>
    </citation>
    <scope>PHOSPHORYLATION [LARGE SCALE ANALYSIS] AT SER-131</scope>
    <scope>IDENTIFICATION BY MASS SPECTROMETRY [LARGE SCALE ANALYSIS]</scope>
    <source>
        <tissue>Cervix carcinoma</tissue>
    </source>
</reference>
<reference key="7">
    <citation type="journal article" date="2007" name="Horm. Metab. Res.">
        <title>ApoA-I-binding protein (AI-BP) and its homologues hYjeF_N2 and hYjeF_N3 comprise the YjeF_N domain protein family in humans with a role in spermiogenesis and oogenesis.</title>
        <authorList>
            <person name="Rudolph C."/>
            <person name="Sigruener A."/>
            <person name="Hartmann A."/>
            <person name="Orso E."/>
            <person name="Bals-Pratsch M."/>
            <person name="Gronwald W."/>
            <person name="Seifert B."/>
            <person name="Kalbitzer H.R."/>
            <person name="Verdorfer I."/>
            <person name="Luetjens C.M."/>
            <person name="Ortmann O."/>
            <person name="Bornstein S.R."/>
            <person name="Schmitz G."/>
        </authorList>
    </citation>
    <scope>FUNCTION</scope>
    <scope>TISSUE SPECIFICITY</scope>
</reference>
<reference key="8">
    <citation type="journal article" date="2008" name="Proc. Natl. Acad. Sci. U.S.A.">
        <title>A quantitative atlas of mitotic phosphorylation.</title>
        <authorList>
            <person name="Dephoure N."/>
            <person name="Zhou C."/>
            <person name="Villen J."/>
            <person name="Beausoleil S.A."/>
            <person name="Bakalarski C.E."/>
            <person name="Elledge S.J."/>
            <person name="Gygi S.P."/>
        </authorList>
    </citation>
    <scope>PHOSPHORYLATION [LARGE SCALE ANALYSIS] AT SER-131</scope>
    <scope>IDENTIFICATION BY MASS SPECTROMETRY [LARGE SCALE ANALYSIS]</scope>
    <source>
        <tissue>Cervix carcinoma</tissue>
    </source>
</reference>
<reference key="9">
    <citation type="journal article" date="2009" name="Anal. Chem.">
        <title>Lys-N and trypsin cover complementary parts of the phosphoproteome in a refined SCX-based approach.</title>
        <authorList>
            <person name="Gauci S."/>
            <person name="Helbig A.O."/>
            <person name="Slijper M."/>
            <person name="Krijgsveld J."/>
            <person name="Heck A.J."/>
            <person name="Mohammed S."/>
        </authorList>
    </citation>
    <scope>IDENTIFICATION BY MASS SPECTROMETRY [LARGE SCALE ANALYSIS]</scope>
</reference>
<reference key="10">
    <citation type="journal article" date="2009" name="Sci. Signal.">
        <title>Quantitative phosphoproteomic analysis of T cell receptor signaling reveals system-wide modulation of protein-protein interactions.</title>
        <authorList>
            <person name="Mayya V."/>
            <person name="Lundgren D.H."/>
            <person name="Hwang S.-I."/>
            <person name="Rezaul K."/>
            <person name="Wu L."/>
            <person name="Eng J.K."/>
            <person name="Rodionov V."/>
            <person name="Han D.K."/>
        </authorList>
    </citation>
    <scope>PHOSPHORYLATION [LARGE SCALE ANALYSIS] AT SER-161</scope>
    <scope>IDENTIFICATION BY MASS SPECTROMETRY [LARGE SCALE ANALYSIS]</scope>
    <source>
        <tissue>Leukemic T-cell</tissue>
    </source>
</reference>
<reference key="11">
    <citation type="journal article" date="2010" name="Sci. Signal.">
        <title>Quantitative phosphoproteomics reveals widespread full phosphorylation site occupancy during mitosis.</title>
        <authorList>
            <person name="Olsen J.V."/>
            <person name="Vermeulen M."/>
            <person name="Santamaria A."/>
            <person name="Kumar C."/>
            <person name="Miller M.L."/>
            <person name="Jensen L.J."/>
            <person name="Gnad F."/>
            <person name="Cox J."/>
            <person name="Jensen T.S."/>
            <person name="Nigg E.A."/>
            <person name="Brunak S."/>
            <person name="Mann M."/>
        </authorList>
    </citation>
    <scope>PHOSPHORYLATION [LARGE SCALE ANALYSIS] AT SER-161</scope>
    <scope>IDENTIFICATION BY MASS SPECTROMETRY [LARGE SCALE ANALYSIS]</scope>
    <source>
        <tissue>Cervix carcinoma</tissue>
    </source>
</reference>
<reference key="12">
    <citation type="journal article" date="2011" name="BMC Syst. Biol.">
        <title>Initial characterization of the human central proteome.</title>
        <authorList>
            <person name="Burkard T.R."/>
            <person name="Planyavsky M."/>
            <person name="Kaupe I."/>
            <person name="Breitwieser F.P."/>
            <person name="Buerckstuemmer T."/>
            <person name="Bennett K.L."/>
            <person name="Superti-Furga G."/>
            <person name="Colinge J."/>
        </authorList>
    </citation>
    <scope>IDENTIFICATION BY MASS SPECTROMETRY [LARGE SCALE ANALYSIS]</scope>
</reference>
<reference key="13">
    <citation type="journal article" date="2011" name="Sci. Signal.">
        <title>System-wide temporal characterization of the proteome and phosphoproteome of human embryonic stem cell differentiation.</title>
        <authorList>
            <person name="Rigbolt K.T."/>
            <person name="Prokhorova T.A."/>
            <person name="Akimov V."/>
            <person name="Henningsen J."/>
            <person name="Johansen P.T."/>
            <person name="Kratchmarova I."/>
            <person name="Kassem M."/>
            <person name="Mann M."/>
            <person name="Olsen J.V."/>
            <person name="Blagoev B."/>
        </authorList>
    </citation>
    <scope>PHOSPHORYLATION [LARGE SCALE ANALYSIS] AT SER-138 AND SER-140</scope>
    <scope>IDENTIFICATION BY MASS SPECTROMETRY [LARGE SCALE ANALYSIS]</scope>
</reference>
<reference key="14">
    <citation type="journal article" date="2013" name="J. Proteome Res.">
        <title>Toward a comprehensive characterization of a human cancer cell phosphoproteome.</title>
        <authorList>
            <person name="Zhou H."/>
            <person name="Di Palma S."/>
            <person name="Preisinger C."/>
            <person name="Peng M."/>
            <person name="Polat A.N."/>
            <person name="Heck A.J."/>
            <person name="Mohammed S."/>
        </authorList>
    </citation>
    <scope>PHOSPHORYLATION [LARGE SCALE ANALYSIS] AT SER-131 AND SER-161</scope>
    <scope>IDENTIFICATION BY MASS SPECTROMETRY [LARGE SCALE ANALYSIS]</scope>
    <source>
        <tissue>Cervix carcinoma</tissue>
        <tissue>Erythroleukemia</tissue>
    </source>
</reference>
<reference key="15">
    <citation type="journal article" date="2014" name="J. Proteomics">
        <title>An enzyme assisted RP-RPLC approach for in-depth analysis of human liver phosphoproteome.</title>
        <authorList>
            <person name="Bian Y."/>
            <person name="Song C."/>
            <person name="Cheng K."/>
            <person name="Dong M."/>
            <person name="Wang F."/>
            <person name="Huang J."/>
            <person name="Sun D."/>
            <person name="Wang L."/>
            <person name="Ye M."/>
            <person name="Zou H."/>
        </authorList>
    </citation>
    <scope>PHOSPHORYLATION [LARGE SCALE ANALYSIS] AT SER-131</scope>
    <scope>IDENTIFICATION BY MASS SPECTROMETRY [LARGE SCALE ANALYSIS]</scope>
    <source>
        <tissue>Liver</tissue>
    </source>
</reference>
<reference key="16">
    <citation type="journal article" date="2015" name="Hum. Mol. Genet.">
        <title>Mutations in DCPS and EDC3 in autosomal recessive intellectual disability indicate a crucial role for mRNA decapping in neurodevelopment.</title>
        <authorList>
            <person name="Ahmed I."/>
            <person name="Buchert R."/>
            <person name="Zhou M."/>
            <person name="Jiao X."/>
            <person name="Mittal K."/>
            <person name="Sheikh T.I."/>
            <person name="Scheller U."/>
            <person name="Vasli N."/>
            <person name="Rafiq M.A."/>
            <person name="Brohi M.Q."/>
            <person name="Mikhailov A."/>
            <person name="Ayaz M."/>
            <person name="Bhatti A."/>
            <person name="Sticht H."/>
            <person name="Nasr T."/>
            <person name="Carter M.T."/>
            <person name="Uebe S."/>
            <person name="Reis A."/>
            <person name="Ayub M."/>
            <person name="John P."/>
            <person name="Kiledjian M."/>
            <person name="Vincent J.B."/>
            <person name="Jamra R.A."/>
        </authorList>
    </citation>
    <scope>FUNCTION</scope>
    <scope>INVOLVEMENT IN MRT50</scope>
    <scope>VARIANT MRT50 SER-54</scope>
    <scope>CHARACTERIZATION OF VARIANT MRT50 SER-54</scope>
</reference>
<reference key="17">
    <citation type="journal article" date="2015" name="Proteomics">
        <title>N-terminome analysis of the human mitochondrial proteome.</title>
        <authorList>
            <person name="Vaca Jacome A.S."/>
            <person name="Rabilloud T."/>
            <person name="Schaeffer-Reiss C."/>
            <person name="Rompais M."/>
            <person name="Ayoub D."/>
            <person name="Lane L."/>
            <person name="Bairoch A."/>
            <person name="Van Dorsselaer A."/>
            <person name="Carapito C."/>
        </authorList>
    </citation>
    <scope>IDENTIFICATION BY MASS SPECTROMETRY [LARGE SCALE ANALYSIS]</scope>
</reference>
<reference key="18">
    <citation type="journal article" date="2019" name="Am. J. Hum. Genet.">
        <title>Rare de novo missense variants in RNA helicase DDX6 cause intellectual disability and dysmorphic features and lead to P-body defects and RNA dysregulation.</title>
        <authorList>
            <person name="Balak C."/>
            <person name="Benard M."/>
            <person name="Schaefer E."/>
            <person name="Iqbal S."/>
            <person name="Ramsey K."/>
            <person name="Ernoult-Lange M."/>
            <person name="Mattioli F."/>
            <person name="Llaci L."/>
            <person name="Geoffroy V."/>
            <person name="Courel M."/>
            <person name="Naymik M."/>
            <person name="Bachman K.K."/>
            <person name="Pfundt R."/>
            <person name="Rump P."/>
            <person name="Ter Beest J."/>
            <person name="Wentzensen I.M."/>
            <person name="Monaghan K.G."/>
            <person name="McWalter K."/>
            <person name="Richholt R."/>
            <person name="Le Bechec A."/>
            <person name="Jepsen W."/>
            <person name="De Both M."/>
            <person name="Belnap N."/>
            <person name="Boland A."/>
            <person name="Piras I.S."/>
            <person name="Deleuze J.F."/>
            <person name="Szelinger S."/>
            <person name="Dollfus H."/>
            <person name="Chelly J."/>
            <person name="Muller J."/>
            <person name="Campbell A."/>
            <person name="Lal D."/>
            <person name="Rangasamy S."/>
            <person name="Mandel J.L."/>
            <person name="Narayanan V."/>
            <person name="Huentelman M."/>
            <person name="Weil D."/>
            <person name="Piton A."/>
        </authorList>
    </citation>
    <scope>INTERACTION WITH DDX6</scope>
</reference>
<reference key="19">
    <citation type="journal article" date="2019" name="Genes Dev.">
        <title>Molecular basis for GIGYF-Me31B complex assembly in 4EHP-mediated translational repression.</title>
        <authorList>
            <person name="Peter D."/>
            <person name="Ruscica V."/>
            <person name="Bawankar P."/>
            <person name="Weber R."/>
            <person name="Helms S."/>
            <person name="Valkov E."/>
            <person name="Igreja C."/>
            <person name="Izaurralde E."/>
        </authorList>
    </citation>
    <scope>INTERACTION WITH DDX6</scope>
</reference>
<reference key="20">
    <citation type="journal article" date="2007" name="Mol. Cell. Biol.">
        <title>A divergent Sm fold in EDC3 proteins mediates DCP1 binding and P-body targeting.</title>
        <authorList>
            <person name="Tritschler F."/>
            <person name="Eulalio A."/>
            <person name="Truffault V."/>
            <person name="Hartmann M.D."/>
            <person name="Helms S."/>
            <person name="Schmidt S."/>
            <person name="Coles M."/>
            <person name="Izaurralde E."/>
            <person name="Weichenrieder O."/>
        </authorList>
    </citation>
    <scope>X-RAY CRYSTALLOGRAPHY (1.31 ANGSTROMS) OF 1-82</scope>
</reference>
<reference key="21">
    <citation type="journal article" date="2008" name="Mol. Cell. Biol.">
        <title>Crystal structure of human Edc3 and its functional implications.</title>
        <authorList>
            <person name="Ling S.H."/>
            <person name="Decker C.J."/>
            <person name="Walsh M.A."/>
            <person name="She M."/>
            <person name="Parker R."/>
            <person name="Song H."/>
        </authorList>
    </citation>
    <scope>X-RAY CRYSTALLOGRAPHY (2.2 ANGSTROMS) OF 250-508</scope>
    <scope>FUNCTION</scope>
    <scope>RNA-BINDING</scope>
    <scope>SUBUNIT</scope>
    <scope>CIRCULAR DICHROISM</scope>
    <scope>MUTAGENESIS OF GLU-306 AND VAL-310</scope>
</reference>
<reference key="22">
    <citation type="journal article" date="2009" name="Mol. Cell">
        <title>Structural basis for the mutually exclusive anchoring of P body components EDC3 and Tral to the DEAD box protein DDX6/Me31B.</title>
        <authorList>
            <person name="Tritschler F."/>
            <person name="Braun J.E."/>
            <person name="Eulalio A."/>
            <person name="Truffault V."/>
            <person name="Izaurralde E."/>
            <person name="Weichenrieder O."/>
        </authorList>
    </citation>
    <scope>X-RAY CRYSTALLOGRAPHY (2.3 ANGSTROMS) OF 192-228 IN COMPLEX WITH DDX6</scope>
    <scope>INTERACTION WITH DDX6</scope>
    <scope>MUTAGENESIS OF PHE-204 AND PHE-206</scope>
    <scope>DOMAIN</scope>
</reference>
<gene>
    <name type="primary">EDC3</name>
    <name type="synonym">LSM16</name>
    <name type="synonym">YJDC</name>
    <name type="synonym">YJEFN2</name>
    <name type="ORF">PP844</name>
</gene>